<comment type="function">
    <text evidence="1">Inhibits RpoS proteolysis by regulating RssB activity, thereby increasing the stability of the sigma stress factor RpoS during magnesium starvation.</text>
</comment>
<comment type="subcellular location">
    <subcellularLocation>
        <location evidence="1">Cytoplasm</location>
    </subcellularLocation>
</comment>
<comment type="similarity">
    <text evidence="1">Belongs to the IraM/RssC family.</text>
</comment>
<feature type="chain" id="PRO_1000138499" description="Anti-adapter protein IraM">
    <location>
        <begin position="1"/>
        <end position="107"/>
    </location>
</feature>
<organism>
    <name type="scientific">Escherichia coli O17:K52:H18 (strain UMN026 / ExPEC)</name>
    <dbReference type="NCBI Taxonomy" id="585056"/>
    <lineage>
        <taxon>Bacteria</taxon>
        <taxon>Pseudomonadati</taxon>
        <taxon>Pseudomonadota</taxon>
        <taxon>Gammaproteobacteria</taxon>
        <taxon>Enterobacterales</taxon>
        <taxon>Enterobacteriaceae</taxon>
        <taxon>Escherichia</taxon>
    </lineage>
</organism>
<name>IRAM_ECOLU</name>
<accession>B7N3W1</accession>
<dbReference type="EMBL" id="CU928163">
    <property type="protein sequence ID" value="CAR12654.1"/>
    <property type="molecule type" value="Genomic_DNA"/>
</dbReference>
<dbReference type="RefSeq" id="WP_001309448.1">
    <property type="nucleotide sequence ID" value="NC_011751.1"/>
</dbReference>
<dbReference type="RefSeq" id="YP_002412192.1">
    <property type="nucleotide sequence ID" value="NC_011751.1"/>
</dbReference>
<dbReference type="SMR" id="B7N3W1"/>
<dbReference type="STRING" id="585056.ECUMN_1445"/>
<dbReference type="KEGG" id="eum:ECUMN_1445"/>
<dbReference type="HOGENOM" id="CLU_143527_1_0_6"/>
<dbReference type="Proteomes" id="UP000007097">
    <property type="component" value="Chromosome"/>
</dbReference>
<dbReference type="GO" id="GO:0005737">
    <property type="term" value="C:cytoplasm"/>
    <property type="evidence" value="ECO:0007669"/>
    <property type="project" value="UniProtKB-SubCell"/>
</dbReference>
<dbReference type="GO" id="GO:0009267">
    <property type="term" value="P:cellular response to starvation"/>
    <property type="evidence" value="ECO:0007669"/>
    <property type="project" value="UniProtKB-UniRule"/>
</dbReference>
<dbReference type="FunFam" id="2.40.50.650:FF:000001">
    <property type="entry name" value="Anti-adapter protein IraM"/>
    <property type="match status" value="1"/>
</dbReference>
<dbReference type="Gene3D" id="2.40.50.650">
    <property type="match status" value="1"/>
</dbReference>
<dbReference type="HAMAP" id="MF_01199">
    <property type="entry name" value="Anti_adapt_IraM"/>
    <property type="match status" value="1"/>
</dbReference>
<dbReference type="InterPro" id="IPR014448">
    <property type="entry name" value="Anti-adapter_IraM"/>
</dbReference>
<dbReference type="InterPro" id="IPR038679">
    <property type="entry name" value="PmrD_sf"/>
</dbReference>
<dbReference type="NCBIfam" id="NF007393">
    <property type="entry name" value="PRK09919.1"/>
    <property type="match status" value="1"/>
</dbReference>
<protein>
    <recommendedName>
        <fullName evidence="1">Anti-adapter protein IraM</fullName>
    </recommendedName>
</protein>
<proteinExistence type="inferred from homology"/>
<gene>
    <name evidence="1" type="primary">iraM</name>
    <name type="ordered locus">ECUMN_1445</name>
</gene>
<evidence type="ECO:0000255" key="1">
    <source>
        <dbReference type="HAMAP-Rule" id="MF_01199"/>
    </source>
</evidence>
<keyword id="KW-0963">Cytoplasm</keyword>
<keyword id="KW-0346">Stress response</keyword>
<reference key="1">
    <citation type="journal article" date="2009" name="PLoS Genet.">
        <title>Organised genome dynamics in the Escherichia coli species results in highly diverse adaptive paths.</title>
        <authorList>
            <person name="Touchon M."/>
            <person name="Hoede C."/>
            <person name="Tenaillon O."/>
            <person name="Barbe V."/>
            <person name="Baeriswyl S."/>
            <person name="Bidet P."/>
            <person name="Bingen E."/>
            <person name="Bonacorsi S."/>
            <person name="Bouchier C."/>
            <person name="Bouvet O."/>
            <person name="Calteau A."/>
            <person name="Chiapello H."/>
            <person name="Clermont O."/>
            <person name="Cruveiller S."/>
            <person name="Danchin A."/>
            <person name="Diard M."/>
            <person name="Dossat C."/>
            <person name="Karoui M.E."/>
            <person name="Frapy E."/>
            <person name="Garry L."/>
            <person name="Ghigo J.M."/>
            <person name="Gilles A.M."/>
            <person name="Johnson J."/>
            <person name="Le Bouguenec C."/>
            <person name="Lescat M."/>
            <person name="Mangenot S."/>
            <person name="Martinez-Jehanne V."/>
            <person name="Matic I."/>
            <person name="Nassif X."/>
            <person name="Oztas S."/>
            <person name="Petit M.A."/>
            <person name="Pichon C."/>
            <person name="Rouy Z."/>
            <person name="Ruf C.S."/>
            <person name="Schneider D."/>
            <person name="Tourret J."/>
            <person name="Vacherie B."/>
            <person name="Vallenet D."/>
            <person name="Medigue C."/>
            <person name="Rocha E.P.C."/>
            <person name="Denamur E."/>
        </authorList>
    </citation>
    <scope>NUCLEOTIDE SEQUENCE [LARGE SCALE GENOMIC DNA]</scope>
    <source>
        <strain>UMN026 / ExPEC</strain>
    </source>
</reference>
<sequence>MKWIVIDTVIQPTCGISFSAIWGDMKMIIWYQPTIFLTPGSIFTPVKSGIIFKDKEYPITIYNITPFNKDLWSLLKSSQECPPGESEITNKCLHNSCIIKICPYGLK</sequence>